<evidence type="ECO:0000250" key="1">
    <source>
        <dbReference type="UniProtKB" id="P68623"/>
    </source>
</evidence>
<evidence type="ECO:0000255" key="2"/>
<evidence type="ECO:0000305" key="3"/>
<gene>
    <name type="primary">OPG099</name>
    <name type="ORF">L5R</name>
</gene>
<sequence length="128" mass="15044">MENVPNVYFNPVFIEPTFKHSLLSVYKHRLIVLFEVFVVFILIYVFFRSELNMFFMPKRKIPDPIDRLRRANLACEDDKLMIYGLPWMTTQTSALSINSKPIVYKDCAKLLRSINGSQPVSLNDVLRR</sequence>
<feature type="chain" id="PRO_0000099626" description="Entry-fusion complex protein OPG094">
    <location>
        <begin position="1"/>
        <end position="128"/>
    </location>
</feature>
<feature type="topological domain" description="Intravirion" evidence="2">
    <location>
        <begin position="1"/>
        <end position="30"/>
    </location>
</feature>
<feature type="transmembrane region" description="Helical; Signal-anchor for type III membrane protein" evidence="2">
    <location>
        <begin position="31"/>
        <end position="51"/>
    </location>
</feature>
<feature type="topological domain" description="Virion surface" evidence="2">
    <location>
        <begin position="52"/>
        <end position="107"/>
    </location>
</feature>
<feature type="disulfide bond" description="By viral enzyme" evidence="1">
    <location>
        <begin position="75"/>
        <end position="107"/>
    </location>
</feature>
<organism>
    <name type="scientific">Vaccinia virus (strain Copenhagen)</name>
    <name type="common">VACV</name>
    <dbReference type="NCBI Taxonomy" id="10249"/>
    <lineage>
        <taxon>Viruses</taxon>
        <taxon>Varidnaviria</taxon>
        <taxon>Bamfordvirae</taxon>
        <taxon>Nucleocytoviricota</taxon>
        <taxon>Pokkesviricetes</taxon>
        <taxon>Chitovirales</taxon>
        <taxon>Poxviridae</taxon>
        <taxon>Chordopoxvirinae</taxon>
        <taxon>Orthopoxvirus</taxon>
        <taxon>Vaccinia virus</taxon>
    </lineage>
</organism>
<name>PG099_VACCC</name>
<reference key="1">
    <citation type="journal article" date="1990" name="Virology">
        <title>The complete DNA sequence of vaccinia virus.</title>
        <authorList>
            <person name="Goebel S.J."/>
            <person name="Johnson G.P."/>
            <person name="Perkus M.E."/>
            <person name="Davis S.W."/>
            <person name="Winslow J.P."/>
            <person name="Paoletti E."/>
        </authorList>
    </citation>
    <scope>NUCLEOTIDE SEQUENCE [LARGE SCALE GENOMIC DNA]</scope>
</reference>
<reference key="2">
    <citation type="journal article" date="1990" name="Virology">
        <title>Appendix to 'The complete DNA sequence of vaccinia virus'.</title>
        <authorList>
            <person name="Goebel S.J."/>
            <person name="Johnson G.P."/>
            <person name="Perkus M.E."/>
            <person name="Davis S.W."/>
            <person name="Winslow J.P."/>
            <person name="Paoletti E."/>
        </authorList>
    </citation>
    <scope>NUCLEOTIDE SEQUENCE [LARGE SCALE GENOMIC DNA]</scope>
</reference>
<accession>P68622</accession>
<accession>P07615</accession>
<keyword id="KW-1015">Disulfide bond</keyword>
<keyword id="KW-1169">Fusion of virus membrane with host cell membrane</keyword>
<keyword id="KW-1168">Fusion of virus membrane with host membrane</keyword>
<keyword id="KW-0426">Late protein</keyword>
<keyword id="KW-0472">Membrane</keyword>
<keyword id="KW-1185">Reference proteome</keyword>
<keyword id="KW-0735">Signal-anchor</keyword>
<keyword id="KW-0812">Transmembrane</keyword>
<keyword id="KW-1133">Transmembrane helix</keyword>
<keyword id="KW-0261">Viral envelope protein</keyword>
<keyword id="KW-1162">Viral penetration into host cytoplasm</keyword>
<keyword id="KW-0946">Virion</keyword>
<keyword id="KW-1160">Virus entry into host cell</keyword>
<dbReference type="EMBL" id="M35027">
    <property type="protein sequence ID" value="AAA48080.1"/>
    <property type="molecule type" value="Genomic_DNA"/>
</dbReference>
<dbReference type="PIR" id="E23092">
    <property type="entry name" value="QQVZF6"/>
</dbReference>
<dbReference type="SMR" id="P68622"/>
<dbReference type="Proteomes" id="UP000008269">
    <property type="component" value="Segment"/>
</dbReference>
<dbReference type="GO" id="GO:0016020">
    <property type="term" value="C:membrane"/>
    <property type="evidence" value="ECO:0007669"/>
    <property type="project" value="UniProtKB-KW"/>
</dbReference>
<dbReference type="GO" id="GO:0019031">
    <property type="term" value="C:viral envelope"/>
    <property type="evidence" value="ECO:0007669"/>
    <property type="project" value="UniProtKB-KW"/>
</dbReference>
<dbReference type="GO" id="GO:0055036">
    <property type="term" value="C:virion membrane"/>
    <property type="evidence" value="ECO:0007669"/>
    <property type="project" value="UniProtKB-SubCell"/>
</dbReference>
<dbReference type="GO" id="GO:0019064">
    <property type="term" value="P:fusion of virus membrane with host plasma membrane"/>
    <property type="evidence" value="ECO:0007669"/>
    <property type="project" value="UniProtKB-KW"/>
</dbReference>
<dbReference type="GO" id="GO:0046718">
    <property type="term" value="P:symbiont entry into host cell"/>
    <property type="evidence" value="ECO:0007669"/>
    <property type="project" value="UniProtKB-KW"/>
</dbReference>
<dbReference type="InterPro" id="IPR006956">
    <property type="entry name" value="Poxvirus_L5"/>
</dbReference>
<dbReference type="Pfam" id="PF04872">
    <property type="entry name" value="Pox_L5"/>
    <property type="match status" value="1"/>
</dbReference>
<proteinExistence type="inferred from homology"/>
<protein>
    <recommendedName>
        <fullName>Entry-fusion complex protein OPG094</fullName>
        <shortName>EFC protein OPG094</shortName>
    </recommendedName>
    <alternativeName>
        <fullName>Protein L5</fullName>
    </alternativeName>
</protein>
<organismHost>
    <name type="scientific">Homo sapiens</name>
    <name type="common">Human</name>
    <dbReference type="NCBI Taxonomy" id="9606"/>
</organismHost>
<comment type="function">
    <text evidence="1">Component of the entry fusion complex (EFC), which consists of 11 proteins. During cell infection, this complex mediates entry of the virion core into the host cytoplasm by a two-step mechanism consisting of lipid mixing of the viral and cellular membranes and subsequent pore formation.</text>
</comment>
<comment type="subunit">
    <text evidence="1">Interacts with OPG086. Component of the entry fusion complex (EFC) composed of OPG053, OPG076, OPG086, OPG094, OPG095, OPG099, OPG107, OPG143, OPG104J5, OPG147 and OPG155. Except for OPG095 and OPG053, each of the EFC proteins is required for assembly or stability of the complex.</text>
</comment>
<comment type="subcellular location">
    <subcellularLocation>
        <location evidence="1">Virion membrane</location>
        <topology evidence="1">Single-pass type III membrane protein</topology>
    </subcellularLocation>
    <text evidence="1">Component of the mature virion (MV) membrane. The mature virion is located in the cytoplasm of infected cells and is probably released by cell lysis.</text>
</comment>
<comment type="induction">
    <text evidence="1">Expressed in the late phase of the viral replicative cycle.</text>
</comment>
<comment type="PTM">
    <text evidence="1">Most cysteines are linked by disulfide bonds. They are created by the viral disulfide bond formation pathway, a poxvirus-specific redox pathway that operates on the cytoplasmic side of the MV membranes.</text>
</comment>
<comment type="PTM">
    <text evidence="1">Unglycosylated because produced in viral factories instead of the classic ER -Golgi route.</text>
</comment>
<comment type="similarity">
    <text evidence="3">Belongs to the orthopoxvirus OPG099 family.</text>
</comment>